<keyword id="KW-0007">Acetylation</keyword>
<keyword id="KW-0067">ATP-binding</keyword>
<keyword id="KW-0158">Chromosome</keyword>
<keyword id="KW-0963">Cytoplasm</keyword>
<keyword id="KW-0227">DNA damage</keyword>
<keyword id="KW-0418">Kinase</keyword>
<keyword id="KW-0460">Magnesium</keyword>
<keyword id="KW-0479">Metal-binding</keyword>
<keyword id="KW-0547">Nucleotide-binding</keyword>
<keyword id="KW-0539">Nucleus</keyword>
<keyword id="KW-0597">Phosphoprotein</keyword>
<keyword id="KW-1185">Reference proteome</keyword>
<keyword id="KW-0723">Serine/threonine-protein kinase</keyword>
<keyword id="KW-0808">Transferase</keyword>
<keyword id="KW-0832">Ubl conjugation</keyword>
<accession>Q91VJ4</accession>
<evidence type="ECO:0000250" key="1">
    <source>
        <dbReference type="UniProtKB" id="O95835"/>
    </source>
</evidence>
<evidence type="ECO:0000250" key="2">
    <source>
        <dbReference type="UniProtKB" id="Q15208"/>
    </source>
</evidence>
<evidence type="ECO:0000255" key="3">
    <source>
        <dbReference type="PROSITE-ProRule" id="PRU00159"/>
    </source>
</evidence>
<evidence type="ECO:0000255" key="4">
    <source>
        <dbReference type="PROSITE-ProRule" id="PRU00618"/>
    </source>
</evidence>
<evidence type="ECO:0000255" key="5">
    <source>
        <dbReference type="PROSITE-ProRule" id="PRU10027"/>
    </source>
</evidence>
<evidence type="ECO:0000269" key="6">
    <source>
    </source>
</evidence>
<evidence type="ECO:0000269" key="7">
    <source>
    </source>
</evidence>
<evidence type="ECO:0000305" key="8"/>
<evidence type="ECO:0000312" key="9">
    <source>
        <dbReference type="EMBL" id="AAH09658.1"/>
    </source>
</evidence>
<evidence type="ECO:0000312" key="10">
    <source>
        <dbReference type="EMBL" id="AAP44997.1"/>
    </source>
</evidence>
<evidence type="ECO:0007744" key="11">
    <source>
    </source>
</evidence>
<gene>
    <name evidence="9" type="primary">Stk38</name>
    <name evidence="2" type="synonym">Ndr1</name>
</gene>
<name>STK38_MOUSE</name>
<proteinExistence type="evidence at protein level"/>
<sequence length="465" mass="54174">MAMTGSTPCSSMSNHTKERVTMTKVTLENFYSNLIAQHEEREMRQKKLEKVMEEEGLKDEEKRLRRSAHARKETEFLRLKRTRLGLEDFESLKVIGRGAFGEVRLVQKKDTGHVYAMKILRKADMLEKEQVGHIRAERDILVEADSLWVVKMFYSFQDKLNLYLIMEFLPGGDMMTLLMKKDTLTEEETQFYIAETVLAIDSIHQLGFIHRDIKPDNLLLDSKGHVKLSDFGLCTGLKKAHRTEFYRNLNHSLPSDFTFQNMNSKRKAETWKRNRRQLAFSTVGTPDYIAPEVFMQTGYNKLCDWWSLGVIMYEMLIGYPPFCSETPQETYKKVMNWKETLTFPPEVPVSEKAKGLILRFCCEWEHRIGAPGVEEIKNNLFFEGVDWEHIRERPAAISIEIKSIDDTSNFDEFPESDILKPTVTTSSHPETDYKNKDWVFINYTYKRFEGLTARGAIPSYMKAAK</sequence>
<comment type="function">
    <text evidence="2 7">Serine/threonine-protein kinase that acts as a negative regulator of MAP3K1/2 signaling (PubMed:21730291). Converts MAP3K2 from its phosphorylated form to its non-phosphorylated form and inhibits autophosphorylation of MAP3K2 (By similarity). Acts as an ufmylation 'reader' in a kinase-independent manner: specifically recognizes and binds mono-ufmylated histone H4 in response to DNA damage, promoting the recruitment of SUV39H1 to the double-strand breaks, resulting in ATM activation (By similarity).</text>
</comment>
<comment type="catalytic activity">
    <reaction evidence="2">
        <text>L-seryl-[protein] + ATP = O-phospho-L-seryl-[protein] + ADP + H(+)</text>
        <dbReference type="Rhea" id="RHEA:17989"/>
        <dbReference type="Rhea" id="RHEA-COMP:9863"/>
        <dbReference type="Rhea" id="RHEA-COMP:11604"/>
        <dbReference type="ChEBI" id="CHEBI:15378"/>
        <dbReference type="ChEBI" id="CHEBI:29999"/>
        <dbReference type="ChEBI" id="CHEBI:30616"/>
        <dbReference type="ChEBI" id="CHEBI:83421"/>
        <dbReference type="ChEBI" id="CHEBI:456216"/>
        <dbReference type="EC" id="2.7.11.1"/>
    </reaction>
</comment>
<comment type="catalytic activity">
    <reaction evidence="2">
        <text>L-threonyl-[protein] + ATP = O-phospho-L-threonyl-[protein] + ADP + H(+)</text>
        <dbReference type="Rhea" id="RHEA:46608"/>
        <dbReference type="Rhea" id="RHEA-COMP:11060"/>
        <dbReference type="Rhea" id="RHEA-COMP:11605"/>
        <dbReference type="ChEBI" id="CHEBI:15378"/>
        <dbReference type="ChEBI" id="CHEBI:30013"/>
        <dbReference type="ChEBI" id="CHEBI:30616"/>
        <dbReference type="ChEBI" id="CHEBI:61977"/>
        <dbReference type="ChEBI" id="CHEBI:456216"/>
        <dbReference type="EC" id="2.7.11.1"/>
    </reaction>
</comment>
<comment type="cofactor">
    <cofactor evidence="2">
        <name>Mg(2+)</name>
        <dbReference type="ChEBI" id="CHEBI:18420"/>
    </cofactor>
</comment>
<comment type="activity regulation">
    <text evidence="2">Activated by binding of S100B which releases autoinhibitory N-lobe interactions, enabling ATP to bind and the autophosphorylation of Ser-281. Thr-444 then undergoes calcium-dependent phosphorylation by STK24/MST3. Interactions between phosphorylated Thr-444 and the N-lobe promote additional structural changes that complete the activation of the kinase. Autoinhibition is also released by the binding of MOB1/MOBKL1A and MOB2/HCCA2 to the N-terminal of STK38.</text>
</comment>
<comment type="subunit">
    <text evidence="2 7">Homodimeric S100B binds two molecules of STK38. Interacts with MOB1 and MOB2 (By similarity). Interacts with MAP3K1 and MAP3K2 (via the kinase catalytic domain) (By similarity). Forms a tripartite complex with MOBKL1B and STK3/MST2 (By similarity). Interacts with MICAL1; leading to inhibit the protein kinase activity by antagonizing activation by MST1/STK4 (PubMed:21730291).</text>
</comment>
<comment type="interaction">
    <interactant intactId="EBI-2527046">
        <id>Q91VJ4</id>
    </interactant>
    <interactant intactId="EBI-4394891">
        <id>Q8VDP3</id>
        <label>Mical1</label>
    </interactant>
    <organismsDiffer>false</organismsDiffer>
    <experiments>9</experiments>
</comment>
<comment type="interaction">
    <interactant intactId="EBI-2527046">
        <id>Q91VJ4</id>
    </interactant>
    <interactant intactId="EBI-367376">
        <id>Q13043</id>
        <label>STK4</label>
    </interactant>
    <organismsDiffer>true</organismsDiffer>
    <experiments>2</experiments>
</comment>
<comment type="subcellular location">
    <subcellularLocation>
        <location evidence="2">Nucleus</location>
    </subcellularLocation>
    <subcellularLocation>
        <location evidence="2">Cytoplasm</location>
    </subcellularLocation>
    <subcellularLocation>
        <location evidence="2">Chromosome</location>
    </subcellularLocation>
    <text evidence="2">Localizes to DNA double-strand breaks in response to DNA damage.</text>
</comment>
<comment type="tissue specificity">
    <text evidence="6">Expressed at high levels in spleen, lung, thymus, brain and fat tissue.</text>
</comment>
<comment type="domain">
    <text evidence="2">The UFM1-interacting motif (UFIM) specifically recognizes and binds ufmylated histone H4.</text>
</comment>
<comment type="PTM">
    <text evidence="2">ISGylated.</text>
</comment>
<comment type="PTM">
    <text evidence="2">Phosphorylated by STK3/MST2 and this is enhanced by MOBKL1B.</text>
</comment>
<comment type="similarity">
    <text evidence="8">Belongs to the protein kinase superfamily. AGC Ser/Thr protein kinase family.</text>
</comment>
<organism>
    <name type="scientific">Mus musculus</name>
    <name type="common">Mouse</name>
    <dbReference type="NCBI Taxonomy" id="10090"/>
    <lineage>
        <taxon>Eukaryota</taxon>
        <taxon>Metazoa</taxon>
        <taxon>Chordata</taxon>
        <taxon>Craniata</taxon>
        <taxon>Vertebrata</taxon>
        <taxon>Euteleostomi</taxon>
        <taxon>Mammalia</taxon>
        <taxon>Eutheria</taxon>
        <taxon>Euarchontoglires</taxon>
        <taxon>Glires</taxon>
        <taxon>Rodentia</taxon>
        <taxon>Myomorpha</taxon>
        <taxon>Muroidea</taxon>
        <taxon>Muridae</taxon>
        <taxon>Murinae</taxon>
        <taxon>Mus</taxon>
        <taxon>Mus</taxon>
    </lineage>
</organism>
<feature type="initiator methionine" description="Removed" evidence="2">
    <location>
        <position position="1"/>
    </location>
</feature>
<feature type="chain" id="PRO_0000086719" description="Serine/threonine-protein kinase 38">
    <location>
        <begin position="2"/>
        <end position="465"/>
    </location>
</feature>
<feature type="domain" description="Protein kinase" evidence="3">
    <location>
        <begin position="89"/>
        <end position="382"/>
    </location>
</feature>
<feature type="domain" description="AGC-kinase C-terminal" evidence="4">
    <location>
        <begin position="383"/>
        <end position="455"/>
    </location>
</feature>
<feature type="region of interest" description="Interaction with S100B" evidence="2">
    <location>
        <begin position="62"/>
        <end position="87"/>
    </location>
</feature>
<feature type="short sequence motif" description="UFM1-interacting motif (UFIM)" evidence="2">
    <location>
        <begin position="306"/>
        <end position="311"/>
    </location>
</feature>
<feature type="active site" description="Proton acceptor" evidence="3 5">
    <location>
        <position position="212"/>
    </location>
</feature>
<feature type="binding site" evidence="1 3">
    <location>
        <begin position="95"/>
        <end position="103"/>
    </location>
    <ligand>
        <name>ATP</name>
        <dbReference type="ChEBI" id="CHEBI:30616"/>
    </ligand>
</feature>
<feature type="binding site" evidence="2 3">
    <location>
        <position position="118"/>
    </location>
    <ligand>
        <name>ATP</name>
        <dbReference type="ChEBI" id="CHEBI:30616"/>
    </ligand>
</feature>
<feature type="modified residue" description="N-acetylalanine" evidence="2">
    <location>
        <position position="2"/>
    </location>
</feature>
<feature type="modified residue" description="Phosphothreonine" evidence="2">
    <location>
        <position position="74"/>
    </location>
</feature>
<feature type="modified residue" description="Phosphoserine" evidence="11">
    <location>
        <position position="264"/>
    </location>
</feature>
<feature type="modified residue" description="Phosphoserine; by autocatalysis" evidence="2">
    <location>
        <position position="281"/>
    </location>
</feature>
<feature type="modified residue" description="Phosphothreonine; by STK24/MST3" evidence="2">
    <location>
        <position position="444"/>
    </location>
</feature>
<protein>
    <recommendedName>
        <fullName>Serine/threonine-protein kinase 38</fullName>
        <ecNumber evidence="2">2.7.11.1</ecNumber>
    </recommendedName>
    <alternativeName>
        <fullName>NDR1 protein kinase</fullName>
    </alternativeName>
    <alternativeName>
        <fullName>Nuclear Dbf2-related kinase 1</fullName>
    </alternativeName>
</protein>
<dbReference type="EC" id="2.7.11.1" evidence="2"/>
<dbReference type="EMBL" id="AY292399">
    <property type="protein sequence ID" value="AAP44997.1"/>
    <property type="molecule type" value="mRNA"/>
</dbReference>
<dbReference type="EMBL" id="BC009658">
    <property type="protein sequence ID" value="AAH09658.1"/>
    <property type="molecule type" value="mRNA"/>
</dbReference>
<dbReference type="CCDS" id="CCDS28589.1"/>
<dbReference type="RefSeq" id="NP_001344102.1">
    <property type="nucleotide sequence ID" value="NM_001357173.1"/>
</dbReference>
<dbReference type="RefSeq" id="NP_598876.1">
    <property type="nucleotide sequence ID" value="NM_134115.3"/>
</dbReference>
<dbReference type="RefSeq" id="XP_036016133.1">
    <property type="nucleotide sequence ID" value="XM_036160240.1"/>
</dbReference>
<dbReference type="BMRB" id="Q91VJ4"/>
<dbReference type="SMR" id="Q91VJ4"/>
<dbReference type="BioGRID" id="223068">
    <property type="interactions" value="15"/>
</dbReference>
<dbReference type="FunCoup" id="Q91VJ4">
    <property type="interactions" value="4408"/>
</dbReference>
<dbReference type="IntAct" id="Q91VJ4">
    <property type="interactions" value="13"/>
</dbReference>
<dbReference type="MINT" id="Q91VJ4"/>
<dbReference type="STRING" id="10090.ENSMUSP00000113657"/>
<dbReference type="iPTMnet" id="Q91VJ4"/>
<dbReference type="PhosphoSitePlus" id="Q91VJ4"/>
<dbReference type="SwissPalm" id="Q91VJ4"/>
<dbReference type="jPOST" id="Q91VJ4"/>
<dbReference type="PaxDb" id="10090-ENSMUSP00000009138"/>
<dbReference type="PeptideAtlas" id="Q91VJ4"/>
<dbReference type="ProteomicsDB" id="258761"/>
<dbReference type="Pumba" id="Q91VJ4"/>
<dbReference type="Antibodypedia" id="29688">
    <property type="antibodies" value="445 antibodies from 32 providers"/>
</dbReference>
<dbReference type="DNASU" id="106504"/>
<dbReference type="Ensembl" id="ENSMUST00000009138.13">
    <property type="protein sequence ID" value="ENSMUSP00000009138.6"/>
    <property type="gene ID" value="ENSMUSG00000024006.18"/>
</dbReference>
<dbReference type="Ensembl" id="ENSMUST00000119274.3">
    <property type="protein sequence ID" value="ENSMUSP00000113657.2"/>
    <property type="gene ID" value="ENSMUSG00000024006.18"/>
</dbReference>
<dbReference type="Ensembl" id="ENSMUST00000232836.2">
    <property type="protein sequence ID" value="ENSMUSP00000156711.2"/>
    <property type="gene ID" value="ENSMUSG00000024006.18"/>
</dbReference>
<dbReference type="GeneID" id="106504"/>
<dbReference type="KEGG" id="mmu:106504"/>
<dbReference type="UCSC" id="uc008bsa.1">
    <property type="organism name" value="mouse"/>
</dbReference>
<dbReference type="AGR" id="MGI:2442572"/>
<dbReference type="CTD" id="11329"/>
<dbReference type="MGI" id="MGI:2442572">
    <property type="gene designation" value="Stk38"/>
</dbReference>
<dbReference type="VEuPathDB" id="HostDB:ENSMUSG00000024006"/>
<dbReference type="eggNOG" id="KOG0605">
    <property type="taxonomic scope" value="Eukaryota"/>
</dbReference>
<dbReference type="GeneTree" id="ENSGT00940000153544"/>
<dbReference type="HOGENOM" id="CLU_000288_67_0_1"/>
<dbReference type="InParanoid" id="Q91VJ4"/>
<dbReference type="OMA" id="MLVHHAL"/>
<dbReference type="PhylomeDB" id="Q91VJ4"/>
<dbReference type="TreeFam" id="TF105337"/>
<dbReference type="Reactome" id="R-MMU-9013418">
    <property type="pathway name" value="RHOBTB2 GTPase cycle"/>
</dbReference>
<dbReference type="Reactome" id="R-MMU-9013422">
    <property type="pathway name" value="RHOBTB1 GTPase cycle"/>
</dbReference>
<dbReference type="BioGRID-ORCS" id="106504">
    <property type="hits" value="7 hits in 82 CRISPR screens"/>
</dbReference>
<dbReference type="ChiTaRS" id="Stk38">
    <property type="organism name" value="mouse"/>
</dbReference>
<dbReference type="PRO" id="PR:Q91VJ4"/>
<dbReference type="Proteomes" id="UP000000589">
    <property type="component" value="Chromosome 17"/>
</dbReference>
<dbReference type="RNAct" id="Q91VJ4">
    <property type="molecule type" value="protein"/>
</dbReference>
<dbReference type="Bgee" id="ENSMUSG00000024006">
    <property type="expression patterns" value="Expressed in granulocyte and 267 other cell types or tissues"/>
</dbReference>
<dbReference type="ExpressionAtlas" id="Q91VJ4">
    <property type="expression patterns" value="baseline and differential"/>
</dbReference>
<dbReference type="GO" id="GO:0005737">
    <property type="term" value="C:cytoplasm"/>
    <property type="evidence" value="ECO:0000250"/>
    <property type="project" value="UniProtKB"/>
</dbReference>
<dbReference type="GO" id="GO:0005829">
    <property type="term" value="C:cytosol"/>
    <property type="evidence" value="ECO:0007669"/>
    <property type="project" value="Ensembl"/>
</dbReference>
<dbReference type="GO" id="GO:0005634">
    <property type="term" value="C:nucleus"/>
    <property type="evidence" value="ECO:0000250"/>
    <property type="project" value="UniProtKB"/>
</dbReference>
<dbReference type="GO" id="GO:0035861">
    <property type="term" value="C:site of double-strand break"/>
    <property type="evidence" value="ECO:0000250"/>
    <property type="project" value="UniProtKB"/>
</dbReference>
<dbReference type="GO" id="GO:0005524">
    <property type="term" value="F:ATP binding"/>
    <property type="evidence" value="ECO:0000250"/>
    <property type="project" value="UniProtKB"/>
</dbReference>
<dbReference type="GO" id="GO:0140566">
    <property type="term" value="F:histone reader activity"/>
    <property type="evidence" value="ECO:0000250"/>
    <property type="project" value="UniProtKB"/>
</dbReference>
<dbReference type="GO" id="GO:0000287">
    <property type="term" value="F:magnesium ion binding"/>
    <property type="evidence" value="ECO:0000250"/>
    <property type="project" value="UniProtKB"/>
</dbReference>
<dbReference type="GO" id="GO:0031435">
    <property type="term" value="F:mitogen-activated protein kinase kinase kinase binding"/>
    <property type="evidence" value="ECO:0007669"/>
    <property type="project" value="Ensembl"/>
</dbReference>
<dbReference type="GO" id="GO:0106310">
    <property type="term" value="F:protein serine kinase activity"/>
    <property type="evidence" value="ECO:0007669"/>
    <property type="project" value="RHEA"/>
</dbReference>
<dbReference type="GO" id="GO:0004674">
    <property type="term" value="F:protein serine/threonine kinase activity"/>
    <property type="evidence" value="ECO:0000250"/>
    <property type="project" value="UniProtKB"/>
</dbReference>
<dbReference type="GO" id="GO:0141185">
    <property type="term" value="F:UFM1-modified protein reader activity"/>
    <property type="evidence" value="ECO:0000250"/>
    <property type="project" value="UniProtKB"/>
</dbReference>
<dbReference type="GO" id="GO:0000077">
    <property type="term" value="P:DNA damage checkpoint signaling"/>
    <property type="evidence" value="ECO:0000250"/>
    <property type="project" value="UniProtKB"/>
</dbReference>
<dbReference type="GO" id="GO:0006974">
    <property type="term" value="P:DNA damage response"/>
    <property type="evidence" value="ECO:0000250"/>
    <property type="project" value="UniProtKB"/>
</dbReference>
<dbReference type="GO" id="GO:0035556">
    <property type="term" value="P:intracellular signal transduction"/>
    <property type="evidence" value="ECO:0000250"/>
    <property type="project" value="UniProtKB"/>
</dbReference>
<dbReference type="GO" id="GO:0043407">
    <property type="term" value="P:negative regulation of MAP kinase activity"/>
    <property type="evidence" value="ECO:0000250"/>
    <property type="project" value="UniProtKB"/>
</dbReference>
<dbReference type="GO" id="GO:0006468">
    <property type="term" value="P:protein phosphorylation"/>
    <property type="evidence" value="ECO:0000250"/>
    <property type="project" value="UniProtKB"/>
</dbReference>
<dbReference type="CDD" id="cd21782">
    <property type="entry name" value="MobB_NDR1"/>
    <property type="match status" value="1"/>
</dbReference>
<dbReference type="CDD" id="cd05628">
    <property type="entry name" value="STKc_NDR1"/>
    <property type="match status" value="1"/>
</dbReference>
<dbReference type="FunFam" id="1.10.510.10:FF:000057">
    <property type="entry name" value="Non-specific serine/threonine protein kinase"/>
    <property type="match status" value="1"/>
</dbReference>
<dbReference type="FunFam" id="1.10.510.10:FF:000086">
    <property type="entry name" value="Non-specific serine/threonine protein kinase"/>
    <property type="match status" value="1"/>
</dbReference>
<dbReference type="FunFam" id="3.30.200.20:FF:000118">
    <property type="entry name" value="Non-specific serine/threonine protein kinase"/>
    <property type="match status" value="1"/>
</dbReference>
<dbReference type="Gene3D" id="3.30.200.20">
    <property type="entry name" value="Phosphorylase Kinase, domain 1"/>
    <property type="match status" value="1"/>
</dbReference>
<dbReference type="Gene3D" id="1.10.510.10">
    <property type="entry name" value="Transferase(Phosphotransferase) domain 1"/>
    <property type="match status" value="1"/>
</dbReference>
<dbReference type="InterPro" id="IPR000961">
    <property type="entry name" value="AGC-kinase_C"/>
</dbReference>
<dbReference type="InterPro" id="IPR011009">
    <property type="entry name" value="Kinase-like_dom_sf"/>
</dbReference>
<dbReference type="InterPro" id="IPR017892">
    <property type="entry name" value="Pkinase_C"/>
</dbReference>
<dbReference type="InterPro" id="IPR000719">
    <property type="entry name" value="Prot_kinase_dom"/>
</dbReference>
<dbReference type="InterPro" id="IPR017441">
    <property type="entry name" value="Protein_kinase_ATP_BS"/>
</dbReference>
<dbReference type="InterPro" id="IPR050839">
    <property type="entry name" value="Rho-assoc_Ser/Thr_Kinase"/>
</dbReference>
<dbReference type="InterPro" id="IPR008271">
    <property type="entry name" value="Ser/Thr_kinase_AS"/>
</dbReference>
<dbReference type="PANTHER" id="PTHR22988:SF76">
    <property type="entry name" value="CHROMOSOME UNDETERMINED SCAFFOLD_135, WHOLE GENOME SHOTGUN SEQUENCE"/>
    <property type="match status" value="1"/>
</dbReference>
<dbReference type="PANTHER" id="PTHR22988">
    <property type="entry name" value="MYOTONIC DYSTROPHY S/T KINASE-RELATED"/>
    <property type="match status" value="1"/>
</dbReference>
<dbReference type="Pfam" id="PF00069">
    <property type="entry name" value="Pkinase"/>
    <property type="match status" value="1"/>
</dbReference>
<dbReference type="Pfam" id="PF00433">
    <property type="entry name" value="Pkinase_C"/>
    <property type="match status" value="1"/>
</dbReference>
<dbReference type="SMART" id="SM00220">
    <property type="entry name" value="S_TKc"/>
    <property type="match status" value="1"/>
</dbReference>
<dbReference type="SUPFAM" id="SSF56112">
    <property type="entry name" value="Protein kinase-like (PK-like)"/>
    <property type="match status" value="1"/>
</dbReference>
<dbReference type="PROSITE" id="PS51285">
    <property type="entry name" value="AGC_KINASE_CTER"/>
    <property type="match status" value="1"/>
</dbReference>
<dbReference type="PROSITE" id="PS00107">
    <property type="entry name" value="PROTEIN_KINASE_ATP"/>
    <property type="match status" value="1"/>
</dbReference>
<dbReference type="PROSITE" id="PS50011">
    <property type="entry name" value="PROTEIN_KINASE_DOM"/>
    <property type="match status" value="1"/>
</dbReference>
<dbReference type="PROSITE" id="PS00108">
    <property type="entry name" value="PROTEIN_KINASE_ST"/>
    <property type="match status" value="1"/>
</dbReference>
<reference evidence="8 10" key="1">
    <citation type="journal article" date="2004" name="J. Biol. Chem.">
        <title>Regulation of NDR2 protein kinase by multi-site phosphorylation and the S100B calcium-binding protein.</title>
        <authorList>
            <person name="Stegert M.R."/>
            <person name="Tamaskovic R."/>
            <person name="Bichsel S.J."/>
            <person name="Hergovich A."/>
            <person name="Hemmings B.A."/>
        </authorList>
    </citation>
    <scope>NUCLEOTIDE SEQUENCE [MRNA]</scope>
    <scope>TISSUE SPECIFICITY</scope>
    <source>
        <strain evidence="10">C57BL/6J</strain>
    </source>
</reference>
<reference evidence="9" key="2">
    <citation type="journal article" date="2004" name="Genome Res.">
        <title>The status, quality, and expansion of the NIH full-length cDNA project: the Mammalian Gene Collection (MGC).</title>
        <authorList>
            <consortium name="The MGC Project Team"/>
        </authorList>
    </citation>
    <scope>NUCLEOTIDE SEQUENCE [LARGE SCALE MRNA]</scope>
    <source>
        <strain evidence="9">FVB/N</strain>
        <tissue evidence="9">Mammary gland</tissue>
    </source>
</reference>
<reference key="3">
    <citation type="journal article" date="2010" name="Cell">
        <title>A tissue-specific atlas of mouse protein phosphorylation and expression.</title>
        <authorList>
            <person name="Huttlin E.L."/>
            <person name="Jedrychowski M.P."/>
            <person name="Elias J.E."/>
            <person name="Goswami T."/>
            <person name="Rad R."/>
            <person name="Beausoleil S.A."/>
            <person name="Villen J."/>
            <person name="Haas W."/>
            <person name="Sowa M.E."/>
            <person name="Gygi S.P."/>
        </authorList>
    </citation>
    <scope>PHOSPHORYLATION [LARGE SCALE ANALYSIS] AT SER-264</scope>
    <scope>IDENTIFICATION BY MASS SPECTROMETRY [LARGE SCALE ANALYSIS]</scope>
    <source>
        <tissue>Brain</tissue>
        <tissue>Brown adipose tissue</tissue>
        <tissue>Kidney</tissue>
        <tissue>Lung</tissue>
        <tissue>Pancreas</tissue>
        <tissue>Spleen</tissue>
        <tissue>Testis</tissue>
    </source>
</reference>
<reference key="4">
    <citation type="journal article" date="2011" name="Mol. Cell. Biol.">
        <title>MICAL-1 is a negative regulator of MST-NDR kinase signaling and apoptosis.</title>
        <authorList>
            <person name="Zhou Y."/>
            <person name="Adolfs Y."/>
            <person name="Pijnappel W.W."/>
            <person name="Fuller S.J."/>
            <person name="Van der Schors R.C."/>
            <person name="Li K.W."/>
            <person name="Sugden P.H."/>
            <person name="Smit A.B."/>
            <person name="Hergovich A."/>
            <person name="Pasterkamp R.J."/>
        </authorList>
    </citation>
    <scope>FUNCTION</scope>
    <scope>INTERACTION WITH MICAL1</scope>
</reference>